<evidence type="ECO:0000255" key="1">
    <source>
        <dbReference type="HAMAP-Rule" id="MF_01334"/>
    </source>
</evidence>
<evidence type="ECO:0000305" key="2"/>
<dbReference type="EMBL" id="CP000013">
    <property type="protein sequence ID" value="AAU07633.1"/>
    <property type="molecule type" value="Genomic_DNA"/>
</dbReference>
<dbReference type="RefSeq" id="WP_011194078.1">
    <property type="nucleotide sequence ID" value="NZ_CP028872.1"/>
</dbReference>
<dbReference type="SMR" id="Q65ZY8"/>
<dbReference type="GeneID" id="45161586"/>
<dbReference type="KEGG" id="bga:BG0811"/>
<dbReference type="eggNOG" id="COG1825">
    <property type="taxonomic scope" value="Bacteria"/>
</dbReference>
<dbReference type="HOGENOM" id="CLU_075939_2_1_12"/>
<dbReference type="OrthoDB" id="9790002at2"/>
<dbReference type="Proteomes" id="UP000002276">
    <property type="component" value="Chromosome"/>
</dbReference>
<dbReference type="GO" id="GO:0022625">
    <property type="term" value="C:cytosolic large ribosomal subunit"/>
    <property type="evidence" value="ECO:0007669"/>
    <property type="project" value="TreeGrafter"/>
</dbReference>
<dbReference type="GO" id="GO:0008097">
    <property type="term" value="F:5S rRNA binding"/>
    <property type="evidence" value="ECO:0007669"/>
    <property type="project" value="InterPro"/>
</dbReference>
<dbReference type="GO" id="GO:0003735">
    <property type="term" value="F:structural constituent of ribosome"/>
    <property type="evidence" value="ECO:0007669"/>
    <property type="project" value="InterPro"/>
</dbReference>
<dbReference type="GO" id="GO:0006412">
    <property type="term" value="P:translation"/>
    <property type="evidence" value="ECO:0007669"/>
    <property type="project" value="UniProtKB-UniRule"/>
</dbReference>
<dbReference type="CDD" id="cd00495">
    <property type="entry name" value="Ribosomal_L25_TL5_CTC"/>
    <property type="match status" value="1"/>
</dbReference>
<dbReference type="Gene3D" id="2.170.120.20">
    <property type="entry name" value="Ribosomal protein L25, beta domain"/>
    <property type="match status" value="1"/>
</dbReference>
<dbReference type="Gene3D" id="2.40.240.10">
    <property type="entry name" value="Ribosomal Protein L25, Chain P"/>
    <property type="match status" value="1"/>
</dbReference>
<dbReference type="HAMAP" id="MF_01334">
    <property type="entry name" value="Ribosomal_bL25_CTC"/>
    <property type="match status" value="1"/>
</dbReference>
<dbReference type="InterPro" id="IPR020056">
    <property type="entry name" value="Rbsml_bL25/Gln-tRNA_synth_N"/>
</dbReference>
<dbReference type="InterPro" id="IPR011035">
    <property type="entry name" value="Ribosomal_bL25/Gln-tRNA_synth"/>
</dbReference>
<dbReference type="InterPro" id="IPR020057">
    <property type="entry name" value="Ribosomal_bL25_b-dom"/>
</dbReference>
<dbReference type="InterPro" id="IPR037121">
    <property type="entry name" value="Ribosomal_bL25_C"/>
</dbReference>
<dbReference type="InterPro" id="IPR001021">
    <property type="entry name" value="Ribosomal_bL25_long"/>
</dbReference>
<dbReference type="InterPro" id="IPR029751">
    <property type="entry name" value="Ribosomal_L25_dom"/>
</dbReference>
<dbReference type="InterPro" id="IPR020930">
    <property type="entry name" value="Ribosomal_uL5_bac-type"/>
</dbReference>
<dbReference type="NCBIfam" id="TIGR00731">
    <property type="entry name" value="bL25_bact_ctc"/>
    <property type="match status" value="1"/>
</dbReference>
<dbReference type="NCBIfam" id="NF004135">
    <property type="entry name" value="PRK05618.3-1"/>
    <property type="match status" value="1"/>
</dbReference>
<dbReference type="PANTHER" id="PTHR33284">
    <property type="entry name" value="RIBOSOMAL PROTEIN L25/GLN-TRNA SYNTHETASE, ANTI-CODON-BINDING DOMAIN-CONTAINING PROTEIN"/>
    <property type="match status" value="1"/>
</dbReference>
<dbReference type="PANTHER" id="PTHR33284:SF1">
    <property type="entry name" value="RIBOSOMAL PROTEIN L25_GLN-TRNA SYNTHETASE, ANTI-CODON-BINDING DOMAIN-CONTAINING PROTEIN"/>
    <property type="match status" value="1"/>
</dbReference>
<dbReference type="Pfam" id="PF01386">
    <property type="entry name" value="Ribosomal_L25p"/>
    <property type="match status" value="1"/>
</dbReference>
<dbReference type="Pfam" id="PF14693">
    <property type="entry name" value="Ribosomal_TL5_C"/>
    <property type="match status" value="1"/>
</dbReference>
<dbReference type="SUPFAM" id="SSF50715">
    <property type="entry name" value="Ribosomal protein L25-like"/>
    <property type="match status" value="1"/>
</dbReference>
<keyword id="KW-0687">Ribonucleoprotein</keyword>
<keyword id="KW-0689">Ribosomal protein</keyword>
<keyword id="KW-0694">RNA-binding</keyword>
<keyword id="KW-0699">rRNA-binding</keyword>
<proteinExistence type="inferred from homology"/>
<reference key="1">
    <citation type="journal article" date="2004" name="Nucleic Acids Res.">
        <title>Comparative analysis of the Borrelia garinii genome.</title>
        <authorList>
            <person name="Gloeckner G."/>
            <person name="Lehmann R."/>
            <person name="Romualdi A."/>
            <person name="Pradella S."/>
            <person name="Schulte-Spechtel U."/>
            <person name="Schilhabel M."/>
            <person name="Wilske B."/>
            <person name="Suehnel J."/>
            <person name="Platzer M."/>
        </authorList>
    </citation>
    <scope>NUCLEOTIDE SEQUENCE [LARGE SCALE GENOMIC DNA]</scope>
    <source>
        <strain>ATCC BAA-2496 / DSM 23469 / PBi</strain>
    </source>
</reference>
<name>RL25_BORGP</name>
<gene>
    <name evidence="1" type="primary">rplY</name>
    <name evidence="1" type="synonym">ctc</name>
    <name type="ordered locus">BG0811</name>
</gene>
<protein>
    <recommendedName>
        <fullName evidence="1">Large ribosomal subunit protein bL25</fullName>
    </recommendedName>
    <alternativeName>
        <fullName evidence="2">50S ribosomal protein L25</fullName>
    </alternativeName>
    <alternativeName>
        <fullName evidence="1">General stress protein CTC</fullName>
    </alternativeName>
</protein>
<accession>Q65ZY8</accession>
<organism>
    <name type="scientific">Borrelia garinii subsp. bavariensis (strain ATCC BAA-2496 / DSM 23469 / PBi)</name>
    <name type="common">Borreliella bavariensis</name>
    <dbReference type="NCBI Taxonomy" id="290434"/>
    <lineage>
        <taxon>Bacteria</taxon>
        <taxon>Pseudomonadati</taxon>
        <taxon>Spirochaetota</taxon>
        <taxon>Spirochaetia</taxon>
        <taxon>Spirochaetales</taxon>
        <taxon>Borreliaceae</taxon>
        <taxon>Borreliella</taxon>
    </lineage>
</organism>
<feature type="chain" id="PRO_0000181520" description="Large ribosomal subunit protein bL25">
    <location>
        <begin position="1"/>
        <end position="182"/>
    </location>
</feature>
<comment type="function">
    <text evidence="1">This is one of the proteins that binds to the 5S RNA in the ribosome where it forms part of the central protuberance.</text>
</comment>
<comment type="subunit">
    <text evidence="1">Part of the 50S ribosomal subunit; part of the 5S rRNA/L5/L18/L25 subcomplex. Contacts the 5S rRNA. Binds to the 5S rRNA independently of L5 and L18.</text>
</comment>
<comment type="similarity">
    <text evidence="1">Belongs to the bacterial ribosomal protein bL25 family. CTC subfamily.</text>
</comment>
<sequence length="182" mass="20641">MENSRILSCKYRTSFGSSNARRIRSKDEIPAVVYGQGNDVLHLKIKSNEFNKKFAKFTDNTVLILDDGKLERCVFIKDVSENIASKLIYHIDFYEVDRRVELEKYVPIKLIGASVGVKEGGILTVLKEQVRVKSLPLDLPEFIELDLTPVNKGDSVFLKDLVLPSNVRLAENDENLEVVTIK</sequence>